<proteinExistence type="inferred from homology"/>
<reference key="1">
    <citation type="journal article" date="2003" name="Appl. Microbiol. Biotechnol.">
        <title>The Corynebacterium glutamicum genome: features and impacts on biotechnological processes.</title>
        <authorList>
            <person name="Ikeda M."/>
            <person name="Nakagawa S."/>
        </authorList>
    </citation>
    <scope>NUCLEOTIDE SEQUENCE [LARGE SCALE GENOMIC DNA]</scope>
    <source>
        <strain>ATCC 13032 / DSM 20300 / JCM 1318 / BCRC 11384 / CCUG 27702 / LMG 3730 / NBRC 12168 / NCIMB 10025 / NRRL B-2784 / 534</strain>
    </source>
</reference>
<reference key="2">
    <citation type="journal article" date="2003" name="J. Biotechnol.">
        <title>The complete Corynebacterium glutamicum ATCC 13032 genome sequence and its impact on the production of L-aspartate-derived amino acids and vitamins.</title>
        <authorList>
            <person name="Kalinowski J."/>
            <person name="Bathe B."/>
            <person name="Bartels D."/>
            <person name="Bischoff N."/>
            <person name="Bott M."/>
            <person name="Burkovski A."/>
            <person name="Dusch N."/>
            <person name="Eggeling L."/>
            <person name="Eikmanns B.J."/>
            <person name="Gaigalat L."/>
            <person name="Goesmann A."/>
            <person name="Hartmann M."/>
            <person name="Huthmacher K."/>
            <person name="Kraemer R."/>
            <person name="Linke B."/>
            <person name="McHardy A.C."/>
            <person name="Meyer F."/>
            <person name="Moeckel B."/>
            <person name="Pfefferle W."/>
            <person name="Puehler A."/>
            <person name="Rey D.A."/>
            <person name="Rueckert C."/>
            <person name="Rupp O."/>
            <person name="Sahm H."/>
            <person name="Wendisch V.F."/>
            <person name="Wiegraebe I."/>
            <person name="Tauch A."/>
        </authorList>
    </citation>
    <scope>NUCLEOTIDE SEQUENCE [LARGE SCALE GENOMIC DNA]</scope>
    <source>
        <strain>ATCC 13032 / DSM 20300 / JCM 1318 / BCRC 11384 / CCUG 27702 / LMG 3730 / NBRC 12168 / NCIMB 10025 / NRRL B-2784 / 534</strain>
    </source>
</reference>
<reference key="3">
    <citation type="journal article" date="1996" name="Arch. Microbiol.">
        <title>A Corynebacterium glutamicum gene encoding a two-domain protein similar to biotin carboxylases and biotin-carboxyl-carrier proteins.</title>
        <authorList>
            <person name="Jaeger W."/>
            <person name="Peters-Wendisch P.G."/>
            <person name="Kalinowski J."/>
            <person name="Puehler A."/>
        </authorList>
    </citation>
    <scope>NUCLEOTIDE SEQUENCE [GENOMIC DNA] OF 77-301</scope>
    <source>
        <strain>ATCC 13032 / DSM 20300 / JCM 1318 / BCRC 11384 / CCUG 27702 / LMG 3730 / NBRC 12168 / NCIMB 10025 / NRRL B-2784 / 534</strain>
    </source>
</reference>
<comment type="catalytic activity">
    <reaction>
        <text>thiosulfate + hydrogen cyanide = thiocyanate + sulfite + 2 H(+)</text>
        <dbReference type="Rhea" id="RHEA:16881"/>
        <dbReference type="ChEBI" id="CHEBI:15378"/>
        <dbReference type="ChEBI" id="CHEBI:17359"/>
        <dbReference type="ChEBI" id="CHEBI:18022"/>
        <dbReference type="ChEBI" id="CHEBI:18407"/>
        <dbReference type="ChEBI" id="CHEBI:33542"/>
        <dbReference type="EC" id="2.8.1.1"/>
    </reaction>
</comment>
<comment type="domain">
    <text evidence="1">Contains two rhodanese domains with different primary structures but with near identical secondary structure conformations suggesting a common evolutionary origin. Only the C-terminal rhodanese domain contains the catalytic cysteine residue (By similarity).</text>
</comment>
<keyword id="KW-1185">Reference proteome</keyword>
<keyword id="KW-0677">Repeat</keyword>
<keyword id="KW-0808">Transferase</keyword>
<organism>
    <name type="scientific">Corynebacterium glutamicum (strain ATCC 13032 / DSM 20300 / JCM 1318 / BCRC 11384 / CCUG 27702 / LMG 3730 / NBRC 12168 / NCIMB 10025 / NRRL B-2784 / 534)</name>
    <dbReference type="NCBI Taxonomy" id="196627"/>
    <lineage>
        <taxon>Bacteria</taxon>
        <taxon>Bacillati</taxon>
        <taxon>Actinomycetota</taxon>
        <taxon>Actinomycetes</taxon>
        <taxon>Mycobacteriales</taxon>
        <taxon>Corynebacteriaceae</taxon>
        <taxon>Corynebacterium</taxon>
    </lineage>
</organism>
<protein>
    <recommendedName>
        <fullName>Thiosulfate sulfurtransferase</fullName>
        <ecNumber>2.8.1.1</ecNumber>
    </recommendedName>
</protein>
<evidence type="ECO:0000250" key="1"/>
<evidence type="ECO:0000255" key="2">
    <source>
        <dbReference type="PROSITE-ProRule" id="PRU00173"/>
    </source>
</evidence>
<dbReference type="EC" id="2.8.1.1"/>
<dbReference type="EMBL" id="BA000036">
    <property type="protein sequence ID" value="BAB98094.1"/>
    <property type="molecule type" value="Genomic_DNA"/>
</dbReference>
<dbReference type="EMBL" id="BX927150">
    <property type="protein sequence ID" value="CAF19406.1"/>
    <property type="molecule type" value="Genomic_DNA"/>
</dbReference>
<dbReference type="EMBL" id="U35023">
    <property type="protein sequence ID" value="AAB40889.1"/>
    <property type="molecule type" value="Genomic_DNA"/>
</dbReference>
<dbReference type="RefSeq" id="NP_599933.1">
    <property type="nucleotide sequence ID" value="NC_003450.3"/>
</dbReference>
<dbReference type="RefSeq" id="WP_011013827.1">
    <property type="nucleotide sequence ID" value="NC_006958.1"/>
</dbReference>
<dbReference type="SMR" id="P71121"/>
<dbReference type="STRING" id="196627.cg0803"/>
<dbReference type="KEGG" id="cgb:cg0803"/>
<dbReference type="KEGG" id="cgl:Cgl0701"/>
<dbReference type="PATRIC" id="fig|196627.13.peg.687"/>
<dbReference type="eggNOG" id="COG2897">
    <property type="taxonomic scope" value="Bacteria"/>
</dbReference>
<dbReference type="HOGENOM" id="CLU_031618_1_3_11"/>
<dbReference type="OrthoDB" id="9781034at2"/>
<dbReference type="BioCyc" id="CORYNE:G18NG-10263-MONOMER"/>
<dbReference type="Proteomes" id="UP000000582">
    <property type="component" value="Chromosome"/>
</dbReference>
<dbReference type="Proteomes" id="UP000001009">
    <property type="component" value="Chromosome"/>
</dbReference>
<dbReference type="GO" id="GO:0004792">
    <property type="term" value="F:thiosulfate-cyanide sulfurtransferase activity"/>
    <property type="evidence" value="ECO:0007669"/>
    <property type="project" value="UniProtKB-EC"/>
</dbReference>
<dbReference type="CDD" id="cd01448">
    <property type="entry name" value="TST_Repeat_1"/>
    <property type="match status" value="1"/>
</dbReference>
<dbReference type="CDD" id="cd01449">
    <property type="entry name" value="TST_Repeat_2"/>
    <property type="match status" value="1"/>
</dbReference>
<dbReference type="Gene3D" id="3.40.250.10">
    <property type="entry name" value="Rhodanese-like domain"/>
    <property type="match status" value="2"/>
</dbReference>
<dbReference type="InterPro" id="IPR001763">
    <property type="entry name" value="Rhodanese-like_dom"/>
</dbReference>
<dbReference type="InterPro" id="IPR036873">
    <property type="entry name" value="Rhodanese-like_dom_sf"/>
</dbReference>
<dbReference type="InterPro" id="IPR051126">
    <property type="entry name" value="Thiosulfate_sulfurtransferase"/>
</dbReference>
<dbReference type="InterPro" id="IPR001307">
    <property type="entry name" value="Thiosulphate_STrfase_CS"/>
</dbReference>
<dbReference type="PANTHER" id="PTHR43855">
    <property type="entry name" value="THIOSULFATE SULFURTRANSFERASE"/>
    <property type="match status" value="1"/>
</dbReference>
<dbReference type="PANTHER" id="PTHR43855:SF1">
    <property type="entry name" value="THIOSULFATE SULFURTRANSFERASE"/>
    <property type="match status" value="1"/>
</dbReference>
<dbReference type="Pfam" id="PF00581">
    <property type="entry name" value="Rhodanese"/>
    <property type="match status" value="2"/>
</dbReference>
<dbReference type="SMART" id="SM00450">
    <property type="entry name" value="RHOD"/>
    <property type="match status" value="2"/>
</dbReference>
<dbReference type="SUPFAM" id="SSF52821">
    <property type="entry name" value="Rhodanese/Cell cycle control phosphatase"/>
    <property type="match status" value="2"/>
</dbReference>
<dbReference type="PROSITE" id="PS00380">
    <property type="entry name" value="RHODANESE_1"/>
    <property type="match status" value="1"/>
</dbReference>
<dbReference type="PROSITE" id="PS00683">
    <property type="entry name" value="RHODANESE_2"/>
    <property type="match status" value="1"/>
</dbReference>
<dbReference type="PROSITE" id="PS50206">
    <property type="entry name" value="RHODANESE_3"/>
    <property type="match status" value="2"/>
</dbReference>
<gene>
    <name type="primary">thtR</name>
    <name type="ordered locus">Cgl0701</name>
    <name type="ordered locus">cg0803</name>
</gene>
<sequence>MAAPFDPFPAFEEYAHPERIVSASWLSARLGSPGLKVVESNEDSLLYDIGHLPGAVRIDWAKDLNDPLTRDFIDGEAFAELMNRKGIARDDTVVVYGDKSNWWAAFTLWVFELFGHSDVRLLNGGRDAWMAEERDTSYVVPEYPSANYPVVERVDENQRAFVAEVLGSLTQSGGMTLVDVRTPSEFSGLDEHGNPTSNTGVLRGGHIPGAINLDWSDAVLPNGNFRTRAELDKLYADLNPADDTVVYCQVGDRAAHTWFVLKYLLGFNNVRNYDGSWAEWGNMVRMPIETGENTKNNVSVS</sequence>
<name>THTR_CORGL</name>
<feature type="chain" id="PRO_0000139407" description="Thiosulfate sulfurtransferase">
    <location>
        <begin position="1"/>
        <end position="301"/>
    </location>
</feature>
<feature type="domain" description="Rhodanese 1" evidence="2">
    <location>
        <begin position="31"/>
        <end position="138"/>
    </location>
</feature>
<feature type="domain" description="Rhodanese 2" evidence="2">
    <location>
        <begin position="171"/>
        <end position="289"/>
    </location>
</feature>
<feature type="active site" description="Cysteine persulfide intermediate" evidence="2">
    <location>
        <position position="248"/>
    </location>
</feature>
<feature type="binding site" evidence="1">
    <location>
        <position position="253"/>
    </location>
    <ligand>
        <name>substrate</name>
    </ligand>
</feature>
<accession>P71121</accession>